<comment type="function">
    <text evidence="1">Plays a role in virus cell tropism, and may be required for efficient virus replication in macrophages. Interferes with host NF-kappa-B promoter activity mediated by TLR8. Mechanistically, inhibits the phosphorylation and subsequent nuclear translocation of host NF-kappa-B RELA subunit downstream of TLR8. Promotes the expression of the autophagy-related protein host ULK1 to degrade host STING and inhibit the interferon response. Also inhibits JAK1- and JAK2-mediated signaling and thus negatively regulates the IFN-gamma signaling.</text>
</comment>
<comment type="subunit">
    <text evidence="1">Interacts with host STING1. Interacts with host JAK1; this interaction leads to JAK1 degradation. Interacts with host JAK2; this interaction leads to JAK2 degradation. Interacts with host RELA; this interaction inhibits NF-kappa-B promoter activity.</text>
</comment>
<comment type="subcellular location">
    <subcellularLocation>
        <location evidence="1">Host cytoplasm</location>
    </subcellularLocation>
</comment>
<comment type="induction">
    <text evidence="1">Expressed in the early phase of the viral replicative cycle.</text>
</comment>
<comment type="similarity">
    <text evidence="2">Belongs to the asfivirus MGF 505 family.</text>
</comment>
<organismHost>
    <name type="scientific">Ornithodoros</name>
    <name type="common">relapsing fever ticks</name>
    <dbReference type="NCBI Taxonomy" id="6937"/>
</organismHost>
<organismHost>
    <name type="scientific">Phacochoerus aethiopicus</name>
    <name type="common">Warthog</name>
    <dbReference type="NCBI Taxonomy" id="85517"/>
</organismHost>
<organismHost>
    <name type="scientific">Phacochoerus africanus</name>
    <name type="common">Warthog</name>
    <dbReference type="NCBI Taxonomy" id="41426"/>
</organismHost>
<organismHost>
    <name type="scientific">Potamochoerus larvatus</name>
    <name type="common">Bushpig</name>
    <dbReference type="NCBI Taxonomy" id="273792"/>
</organismHost>
<organismHost>
    <name type="scientific">Sus scrofa</name>
    <name type="common">Pig</name>
    <dbReference type="NCBI Taxonomy" id="9823"/>
</organismHost>
<sequence>MFSLQDLCRKNTFFLPSDFSKHTLHLLGLYWKGHGSIQRIKNDGVLIEHDLLLSINEALILAGEEGNNDVVQLLLLWEGNLHYAIIGALRTEKYGLICEYHSQIQDWHVLLPLIQDPETFEKCHDLSLECDLSCLLQHAVKYNMLSILVKYKEDLLNVLFRQQIQGLFILACENRKLEILTWMGQNLPIPDPEPIFNIAVVTKDLEMFSLGYKIVFEYMENQGLFHLTQVVRMVMINRHFSMVINKGLLPFVLEILKHGGHVNRALSYAVTQNKRKILDHVVRQKNVPHKTIERMLHLAVKKHAPRKTLNLLLSYINYKVKNVKKLLEHVVKYNSTLVIRILLEKKKNLLDATLTRYVKDSTYFRVKEFMQDFSISPEKFIKIAVREQKNVLIKAICEDIWENPAERIRNLKQIVCTIKYESGRQFLINIIHTIYQSYSLKPEEILKLATFYVKHNATTHFKDLCKYLWLNRGTESKKLFLECLEIADKKEFPDIKSIVSEYINYLFTAGAITKEEIMRVYALEYAMY</sequence>
<dbReference type="EMBL" id="AY261366">
    <property type="status" value="NOT_ANNOTATED_CDS"/>
    <property type="molecule type" value="Genomic_DNA"/>
</dbReference>
<dbReference type="SMR" id="P0C9U5"/>
<dbReference type="Proteomes" id="UP000000858">
    <property type="component" value="Segment"/>
</dbReference>
<dbReference type="GO" id="GO:0030430">
    <property type="term" value="C:host cell cytoplasm"/>
    <property type="evidence" value="ECO:0007669"/>
    <property type="project" value="UniProtKB-SubCell"/>
</dbReference>
<dbReference type="GO" id="GO:0052170">
    <property type="term" value="P:symbiont-mediated suppression of host innate immune response"/>
    <property type="evidence" value="ECO:0007669"/>
    <property type="project" value="UniProtKB-KW"/>
</dbReference>
<dbReference type="GO" id="GO:0039576">
    <property type="term" value="P:symbiont-mediated suppression of host JAK-STAT cascade via inhibition of JAK1 activity"/>
    <property type="evidence" value="ECO:0007669"/>
    <property type="project" value="UniProtKB-KW"/>
</dbReference>
<dbReference type="GO" id="GO:0039502">
    <property type="term" value="P:symbiont-mediated suppression of host type I interferon-mediated signaling pathway"/>
    <property type="evidence" value="ECO:0007669"/>
    <property type="project" value="UniProtKB-KW"/>
</dbReference>
<dbReference type="InterPro" id="IPR004858">
    <property type="entry name" value="MGF_505"/>
</dbReference>
<dbReference type="Pfam" id="PF03158">
    <property type="entry name" value="DUF249"/>
    <property type="match status" value="1"/>
</dbReference>
<organism>
    <name type="scientific">African swine fever virus (isolate Warthog/Namibia/Wart80/1980)</name>
    <name type="common">ASFV</name>
    <dbReference type="NCBI Taxonomy" id="561444"/>
    <lineage>
        <taxon>Viruses</taxon>
        <taxon>Varidnaviria</taxon>
        <taxon>Bamfordvirae</taxon>
        <taxon>Nucleocytoviricota</taxon>
        <taxon>Pokkesviricetes</taxon>
        <taxon>Asfuvirales</taxon>
        <taxon>Asfarviridae</taxon>
        <taxon>Asfivirus</taxon>
        <taxon>African swine fever virus</taxon>
    </lineage>
</organism>
<feature type="chain" id="PRO_0000373343" description="Protein MGF 505-7R">
    <location>
        <begin position="1"/>
        <end position="528"/>
    </location>
</feature>
<feature type="repeat" description="ANK 1">
    <location>
        <begin position="129"/>
        <end position="158"/>
    </location>
</feature>
<feature type="repeat" description="ANK 2">
    <location>
        <begin position="261"/>
        <end position="290"/>
    </location>
</feature>
<feature type="repeat" description="ANK 3">
    <location>
        <begin position="292"/>
        <end position="322"/>
    </location>
</feature>
<evidence type="ECO:0000250" key="1">
    <source>
        <dbReference type="UniProtKB" id="Q89925"/>
    </source>
</evidence>
<evidence type="ECO:0000305" key="2"/>
<proteinExistence type="inferred from homology"/>
<gene>
    <name type="ordered locus">War-041</name>
</gene>
<accession>P0C9U5</accession>
<keyword id="KW-0040">ANK repeat</keyword>
<keyword id="KW-1035">Host cytoplasm</keyword>
<keyword id="KW-0945">Host-virus interaction</keyword>
<keyword id="KW-1090">Inhibition of host innate immune response by virus</keyword>
<keyword id="KW-1114">Inhibition of host interferon signaling pathway by virus</keyword>
<keyword id="KW-1096">Inhibition of host JAK1 by virus</keyword>
<keyword id="KW-0922">Interferon antiviral system evasion</keyword>
<keyword id="KW-0677">Repeat</keyword>
<keyword id="KW-0899">Viral immunoevasion</keyword>
<protein>
    <recommendedName>
        <fullName>Protein MGF 505-7R</fullName>
    </recommendedName>
</protein>
<name>5057R_ASFWA</name>
<reference key="1">
    <citation type="submission" date="2003-03" db="EMBL/GenBank/DDBJ databases">
        <title>African swine fever virus genomes.</title>
        <authorList>
            <person name="Kutish G.F."/>
            <person name="Rock D.L."/>
        </authorList>
    </citation>
    <scope>NUCLEOTIDE SEQUENCE [LARGE SCALE GENOMIC DNA]</scope>
</reference>